<feature type="chain" id="PRO_0000274766" description="Phosphonates import ATP-binding protein PhnC">
    <location>
        <begin position="1"/>
        <end position="272"/>
    </location>
</feature>
<feature type="domain" description="ABC transporter" evidence="1">
    <location>
        <begin position="2"/>
        <end position="244"/>
    </location>
</feature>
<feature type="binding site" evidence="1">
    <location>
        <begin position="35"/>
        <end position="42"/>
    </location>
    <ligand>
        <name>ATP</name>
        <dbReference type="ChEBI" id="CHEBI:30616"/>
    </ligand>
</feature>
<keyword id="KW-0067">ATP-binding</keyword>
<keyword id="KW-0997">Cell inner membrane</keyword>
<keyword id="KW-1003">Cell membrane</keyword>
<keyword id="KW-0472">Membrane</keyword>
<keyword id="KW-0547">Nucleotide-binding</keyword>
<keyword id="KW-0918">Phosphonate transport</keyword>
<keyword id="KW-1278">Translocase</keyword>
<keyword id="KW-0813">Transport</keyword>
<gene>
    <name evidence="1" type="primary">phnC</name>
    <name type="ordered locus">Tcr_2080</name>
</gene>
<evidence type="ECO:0000255" key="1">
    <source>
        <dbReference type="HAMAP-Rule" id="MF_01713"/>
    </source>
</evidence>
<protein>
    <recommendedName>
        <fullName evidence="1">Phosphonates import ATP-binding protein PhnC</fullName>
        <ecNumber evidence="1">7.3.2.2</ecNumber>
    </recommendedName>
</protein>
<proteinExistence type="inferred from homology"/>
<accession>Q31DV4</accession>
<reference key="1">
    <citation type="journal article" date="2006" name="PLoS Biol.">
        <title>The genome of deep-sea vent chemolithoautotroph Thiomicrospira crunogena XCL-2.</title>
        <authorList>
            <person name="Scott K.M."/>
            <person name="Sievert S.M."/>
            <person name="Abril F.N."/>
            <person name="Ball L.A."/>
            <person name="Barrett C.J."/>
            <person name="Blake R.A."/>
            <person name="Boller A.J."/>
            <person name="Chain P.S.G."/>
            <person name="Clark J.A."/>
            <person name="Davis C.R."/>
            <person name="Detter C."/>
            <person name="Do K.F."/>
            <person name="Dobrinski K.P."/>
            <person name="Faza B.I."/>
            <person name="Fitzpatrick K.A."/>
            <person name="Freyermuth S.K."/>
            <person name="Harmer T.L."/>
            <person name="Hauser L.J."/>
            <person name="Huegler M."/>
            <person name="Kerfeld C.A."/>
            <person name="Klotz M.G."/>
            <person name="Kong W.W."/>
            <person name="Land M."/>
            <person name="Lapidus A."/>
            <person name="Larimer F.W."/>
            <person name="Longo D.L."/>
            <person name="Lucas S."/>
            <person name="Malfatti S.A."/>
            <person name="Massey S.E."/>
            <person name="Martin D.D."/>
            <person name="McCuddin Z."/>
            <person name="Meyer F."/>
            <person name="Moore J.L."/>
            <person name="Ocampo L.H. Jr."/>
            <person name="Paul J.H."/>
            <person name="Paulsen I.T."/>
            <person name="Reep D.K."/>
            <person name="Ren Q."/>
            <person name="Ross R.L."/>
            <person name="Sato P.Y."/>
            <person name="Thomas P."/>
            <person name="Tinkham L.E."/>
            <person name="Zeruth G.T."/>
        </authorList>
    </citation>
    <scope>NUCLEOTIDE SEQUENCE [LARGE SCALE GENOMIC DNA]</scope>
    <source>
        <strain>DSM 25203 / XCL-2</strain>
    </source>
</reference>
<organism>
    <name type="scientific">Hydrogenovibrio crunogenus (strain DSM 25203 / XCL-2)</name>
    <name type="common">Thiomicrospira crunogena</name>
    <dbReference type="NCBI Taxonomy" id="317025"/>
    <lineage>
        <taxon>Bacteria</taxon>
        <taxon>Pseudomonadati</taxon>
        <taxon>Pseudomonadota</taxon>
        <taxon>Gammaproteobacteria</taxon>
        <taxon>Thiotrichales</taxon>
        <taxon>Piscirickettsiaceae</taxon>
        <taxon>Hydrogenovibrio</taxon>
    </lineage>
</organism>
<dbReference type="EC" id="7.3.2.2" evidence="1"/>
<dbReference type="EMBL" id="CP000109">
    <property type="protein sequence ID" value="ABB42669.1"/>
    <property type="molecule type" value="Genomic_DNA"/>
</dbReference>
<dbReference type="SMR" id="Q31DV4"/>
<dbReference type="STRING" id="317025.Tcr_2080"/>
<dbReference type="KEGG" id="tcx:Tcr_2080"/>
<dbReference type="eggNOG" id="COG3638">
    <property type="taxonomic scope" value="Bacteria"/>
</dbReference>
<dbReference type="HOGENOM" id="CLU_000604_1_22_6"/>
<dbReference type="OrthoDB" id="9801477at2"/>
<dbReference type="GO" id="GO:0005886">
    <property type="term" value="C:plasma membrane"/>
    <property type="evidence" value="ECO:0007669"/>
    <property type="project" value="UniProtKB-SubCell"/>
</dbReference>
<dbReference type="GO" id="GO:0015416">
    <property type="term" value="F:ABC-type phosphonate transporter activity"/>
    <property type="evidence" value="ECO:0007669"/>
    <property type="project" value="UniProtKB-EC"/>
</dbReference>
<dbReference type="GO" id="GO:0005524">
    <property type="term" value="F:ATP binding"/>
    <property type="evidence" value="ECO:0007669"/>
    <property type="project" value="UniProtKB-KW"/>
</dbReference>
<dbReference type="GO" id="GO:0016887">
    <property type="term" value="F:ATP hydrolysis activity"/>
    <property type="evidence" value="ECO:0007669"/>
    <property type="project" value="InterPro"/>
</dbReference>
<dbReference type="CDD" id="cd03256">
    <property type="entry name" value="ABC_PhnC_transporter"/>
    <property type="match status" value="1"/>
</dbReference>
<dbReference type="Gene3D" id="3.40.50.300">
    <property type="entry name" value="P-loop containing nucleotide triphosphate hydrolases"/>
    <property type="match status" value="1"/>
</dbReference>
<dbReference type="InterPro" id="IPR003593">
    <property type="entry name" value="AAA+_ATPase"/>
</dbReference>
<dbReference type="InterPro" id="IPR003439">
    <property type="entry name" value="ABC_transporter-like_ATP-bd"/>
</dbReference>
<dbReference type="InterPro" id="IPR017871">
    <property type="entry name" value="ABC_transporter-like_CS"/>
</dbReference>
<dbReference type="InterPro" id="IPR012693">
    <property type="entry name" value="ABC_transpr_PhnC"/>
</dbReference>
<dbReference type="InterPro" id="IPR050086">
    <property type="entry name" value="MetN_ABC_transporter-like"/>
</dbReference>
<dbReference type="InterPro" id="IPR027417">
    <property type="entry name" value="P-loop_NTPase"/>
</dbReference>
<dbReference type="NCBIfam" id="TIGR02315">
    <property type="entry name" value="ABC_phnC"/>
    <property type="match status" value="1"/>
</dbReference>
<dbReference type="PANTHER" id="PTHR43166">
    <property type="entry name" value="AMINO ACID IMPORT ATP-BINDING PROTEIN"/>
    <property type="match status" value="1"/>
</dbReference>
<dbReference type="PANTHER" id="PTHR43166:SF6">
    <property type="entry name" value="PHOSPHONATES IMPORT ATP-BINDING PROTEIN PHNC"/>
    <property type="match status" value="1"/>
</dbReference>
<dbReference type="Pfam" id="PF00005">
    <property type="entry name" value="ABC_tran"/>
    <property type="match status" value="1"/>
</dbReference>
<dbReference type="SMART" id="SM00382">
    <property type="entry name" value="AAA"/>
    <property type="match status" value="1"/>
</dbReference>
<dbReference type="SUPFAM" id="SSF52540">
    <property type="entry name" value="P-loop containing nucleoside triphosphate hydrolases"/>
    <property type="match status" value="1"/>
</dbReference>
<dbReference type="PROSITE" id="PS00211">
    <property type="entry name" value="ABC_TRANSPORTER_1"/>
    <property type="match status" value="1"/>
</dbReference>
<dbReference type="PROSITE" id="PS50893">
    <property type="entry name" value="ABC_TRANSPORTER_2"/>
    <property type="match status" value="1"/>
</dbReference>
<dbReference type="PROSITE" id="PS51249">
    <property type="entry name" value="PHNC"/>
    <property type="match status" value="1"/>
</dbReference>
<name>PHNC_HYDCU</name>
<sequence length="272" mass="30155">MLVFDKVNRVYPDGTQAVKNVSVHLEKGEFCVLLGPSGAGKSTLMNMVNGLVEPSSGEIILDGGVLNKKNLQLIQRSVSMIHQQLYLIPRLSVLHNVLTGILPTANFWTSLVKSFPVKDQQRAFELLSEVGLEEKHLMRRASALSGGQQQRVAIARAFMANPKVVLADEPVASLDPAMSRSVLNSLKHAAQTNGATVLCTLHQIDYALEFADRIVALREGEVFFDGHPSDMDEDIQKRLYEIEHETKEKMQKNHQKALEDSLSFELKIKAVA</sequence>
<comment type="function">
    <text evidence="1">Part of the ABC transporter complex PhnCDE involved in phosphonates import. Responsible for energy coupling to the transport system.</text>
</comment>
<comment type="catalytic activity">
    <reaction evidence="1">
        <text>phosphonate(out) + ATP + H2O = phosphonate(in) + ADP + phosphate + H(+)</text>
        <dbReference type="Rhea" id="RHEA:18065"/>
        <dbReference type="ChEBI" id="CHEBI:15377"/>
        <dbReference type="ChEBI" id="CHEBI:15378"/>
        <dbReference type="ChEBI" id="CHEBI:16215"/>
        <dbReference type="ChEBI" id="CHEBI:30616"/>
        <dbReference type="ChEBI" id="CHEBI:43474"/>
        <dbReference type="ChEBI" id="CHEBI:456216"/>
        <dbReference type="EC" id="7.3.2.2"/>
    </reaction>
</comment>
<comment type="subunit">
    <text evidence="1">The complex is composed of two ATP-binding proteins (PhnC), two transmembrane proteins (PhnE) and a solute-binding protein (PhnD).</text>
</comment>
<comment type="subcellular location">
    <subcellularLocation>
        <location evidence="1">Cell inner membrane</location>
        <topology evidence="1">Peripheral membrane protein</topology>
    </subcellularLocation>
</comment>
<comment type="similarity">
    <text evidence="1">Belongs to the ABC transporter superfamily. Phosphonates importer (TC 3.A.1.9.1) family.</text>
</comment>